<comment type="function">
    <text evidence="1 2">Confers resistance to antitubercular drugs benzothiazinone (BTZ) and dinitrobenzamide (DNB). Inactivates BTZ and DNB by reducing an essential nitro group of these compounds to amino group or to hydroxyl amine, respectively, using NADH or NADPH as source of reducing equivalents; two electrons are transferred (PubMed:20624223, PubMed:22069462). Able to reduce the nitro group of bicyclic nitroimidazole PA-824, but not of quinone menadione, nitrofurazone, methyl-4-nitrobenzoate, 4-nitrobenzene methyl sulfonate or 4-nitroacetophenone (PubMed:20624223).</text>
</comment>
<comment type="cofactor">
    <cofactor evidence="1">
        <name>FMN</name>
        <dbReference type="ChEBI" id="CHEBI:58210"/>
    </cofactor>
    <text evidence="1">Binds 1 FMN per subunit.</text>
</comment>
<comment type="biophysicochemical properties">
    <kinetics>
        <KM evidence="1">10.75 uM for NADH (at pH 8.0 and 25 degrees Celsius)</KM>
        <KM evidence="1">8.15 uM for NADPH (at pH 8.0 and 25 degrees Celsius)</KM>
    </kinetics>
    <phDependence>
        <text evidence="1">Optimum pH is 7.5 to 9.0.</text>
    </phDependence>
</comment>
<comment type="subunit">
    <text evidence="1">Homodimer.</text>
</comment>
<comment type="induction">
    <text evidence="1">Transcriptionally repressed by MSMEG_6503/MSMEI_6332.</text>
</comment>
<comment type="disruption phenotype">
    <text evidence="1">Loss of resistance to antitubercular drug BTZ043, but still resistant to PA-824.</text>
</comment>
<comment type="biotechnology">
    <text evidence="5">Potentially helps in the design of second generation BTZ and DNB drugs that are less susceptible to nitroreduction.</text>
</comment>
<comment type="similarity">
    <text evidence="5">Belongs to the nitroreductase family.</text>
</comment>
<comment type="sequence caution" evidence="5">
    <conflict type="erroneous initiation">
        <sequence resource="EMBL-CDS" id="AFP42759"/>
    </conflict>
    <text>Truncated N-terminus.</text>
</comment>
<gene>
    <name evidence="3 4" type="primary">nfnB</name>
    <name evidence="6" type="ordered locus">MSMEG_6505</name>
    <name evidence="7" type="ordered locus">MSMEI_6333</name>
</gene>
<keyword id="KW-0002">3D-structure</keyword>
<keyword id="KW-0285">Flavoprotein</keyword>
<keyword id="KW-0288">FMN</keyword>
<keyword id="KW-0520">NAD</keyword>
<keyword id="KW-0521">NADP</keyword>
<keyword id="KW-0547">Nucleotide-binding</keyword>
<keyword id="KW-0560">Oxidoreductase</keyword>
<keyword id="KW-1185">Reference proteome</keyword>
<dbReference type="EC" id="1.-.-.-" evidence="1 2"/>
<dbReference type="EMBL" id="CP000480">
    <property type="protein sequence ID" value="ABK74228.1"/>
    <property type="molecule type" value="Genomic_DNA"/>
</dbReference>
<dbReference type="EMBL" id="CP001663">
    <property type="protein sequence ID" value="AFP42759.1"/>
    <property type="status" value="ALT_INIT"/>
    <property type="molecule type" value="Genomic_DNA"/>
</dbReference>
<dbReference type="RefSeq" id="WP_011731326.1">
    <property type="nucleotide sequence ID" value="NZ_SIJM01000033.1"/>
</dbReference>
<dbReference type="RefSeq" id="YP_890718.1">
    <property type="nucleotide sequence ID" value="NC_008596.1"/>
</dbReference>
<dbReference type="PDB" id="2WZV">
    <property type="method" value="X-ray"/>
    <property type="resolution" value="1.75 A"/>
    <property type="chains" value="A/B=1-234"/>
</dbReference>
<dbReference type="PDB" id="2WZW">
    <property type="method" value="X-ray"/>
    <property type="resolution" value="1.80 A"/>
    <property type="chains" value="A/B=1-234"/>
</dbReference>
<dbReference type="PDBsum" id="2WZV"/>
<dbReference type="PDBsum" id="2WZW"/>
<dbReference type="SMR" id="A0R6D0"/>
<dbReference type="STRING" id="246196.MSMEG_6505"/>
<dbReference type="PaxDb" id="246196-MSMEI_6333"/>
<dbReference type="KEGG" id="msg:MSMEI_6333"/>
<dbReference type="KEGG" id="msm:MSMEG_6505"/>
<dbReference type="PATRIC" id="fig|246196.19.peg.6329"/>
<dbReference type="eggNOG" id="COG0778">
    <property type="taxonomic scope" value="Bacteria"/>
</dbReference>
<dbReference type="OrthoDB" id="9798230at2"/>
<dbReference type="EvolutionaryTrace" id="A0R6D0"/>
<dbReference type="Proteomes" id="UP000000757">
    <property type="component" value="Chromosome"/>
</dbReference>
<dbReference type="Proteomes" id="UP000006158">
    <property type="component" value="Chromosome"/>
</dbReference>
<dbReference type="GO" id="GO:0010181">
    <property type="term" value="F:FMN binding"/>
    <property type="evidence" value="ECO:0000314"/>
    <property type="project" value="UniProtKB"/>
</dbReference>
<dbReference type="GO" id="GO:0042802">
    <property type="term" value="F:identical protein binding"/>
    <property type="evidence" value="ECO:0000314"/>
    <property type="project" value="UniProtKB"/>
</dbReference>
<dbReference type="GO" id="GO:0050661">
    <property type="term" value="F:NADP binding"/>
    <property type="evidence" value="ECO:0000314"/>
    <property type="project" value="UniProtKB"/>
</dbReference>
<dbReference type="GO" id="GO:0016491">
    <property type="term" value="F:oxidoreductase activity"/>
    <property type="evidence" value="ECO:0000314"/>
    <property type="project" value="UniProtKB"/>
</dbReference>
<dbReference type="GO" id="GO:0042803">
    <property type="term" value="F:protein homodimerization activity"/>
    <property type="evidence" value="ECO:0000314"/>
    <property type="project" value="UniProtKB"/>
</dbReference>
<dbReference type="GO" id="GO:0042178">
    <property type="term" value="P:xenobiotic catabolic process"/>
    <property type="evidence" value="ECO:0000314"/>
    <property type="project" value="UniProtKB"/>
</dbReference>
<dbReference type="CDD" id="cd02136">
    <property type="entry name" value="PnbA_NfnB-like"/>
    <property type="match status" value="1"/>
</dbReference>
<dbReference type="Gene3D" id="3.40.109.10">
    <property type="entry name" value="NADH Oxidase"/>
    <property type="match status" value="1"/>
</dbReference>
<dbReference type="InterPro" id="IPR029479">
    <property type="entry name" value="Nitroreductase"/>
</dbReference>
<dbReference type="InterPro" id="IPR000415">
    <property type="entry name" value="Nitroreductase-like"/>
</dbReference>
<dbReference type="InterPro" id="IPR050627">
    <property type="entry name" value="Nitroreductase/BluB"/>
</dbReference>
<dbReference type="PANTHER" id="PTHR23026:SF90">
    <property type="entry name" value="IODOTYROSINE DEIODINASE 1"/>
    <property type="match status" value="1"/>
</dbReference>
<dbReference type="PANTHER" id="PTHR23026">
    <property type="entry name" value="NADPH NITROREDUCTASE"/>
    <property type="match status" value="1"/>
</dbReference>
<dbReference type="Pfam" id="PF00881">
    <property type="entry name" value="Nitroreductase"/>
    <property type="match status" value="1"/>
</dbReference>
<dbReference type="SUPFAM" id="SSF55469">
    <property type="entry name" value="FMN-dependent nitroreductase-like"/>
    <property type="match status" value="1"/>
</dbReference>
<feature type="chain" id="PRO_0000433873" description="Nitroreductase NfnB">
    <location>
        <begin position="1"/>
        <end position="234"/>
    </location>
</feature>
<feature type="binding site" evidence="1 10 11">
    <location>
        <begin position="25"/>
        <end position="29"/>
    </location>
    <ligand>
        <name>FMN</name>
        <dbReference type="ChEBI" id="CHEBI:58210"/>
    </ligand>
</feature>
<feature type="binding site" evidence="1 11">
    <location>
        <position position="55"/>
    </location>
    <ligand>
        <name>NADP(+)</name>
        <dbReference type="ChEBI" id="CHEBI:58349"/>
    </ligand>
</feature>
<feature type="binding site" evidence="1 11">
    <location>
        <position position="105"/>
    </location>
    <ligand>
        <name>NADP(+)</name>
        <dbReference type="ChEBI" id="CHEBI:58349"/>
    </ligand>
</feature>
<feature type="binding site" evidence="1 11">
    <location>
        <position position="113"/>
    </location>
    <ligand>
        <name>NADP(+)</name>
        <dbReference type="ChEBI" id="CHEBI:58349"/>
    </ligand>
</feature>
<feature type="binding site" evidence="1">
    <location>
        <position position="118"/>
    </location>
    <ligand>
        <name>NADP(+)</name>
        <dbReference type="ChEBI" id="CHEBI:58349"/>
    </ligand>
</feature>
<feature type="binding site" evidence="1 10 11">
    <location>
        <position position="137"/>
    </location>
    <ligand>
        <name>FMN</name>
        <dbReference type="ChEBI" id="CHEBI:58210"/>
    </ligand>
</feature>
<feature type="binding site" evidence="1 10 11">
    <location>
        <begin position="181"/>
        <end position="182"/>
    </location>
    <ligand>
        <name>FMN</name>
        <dbReference type="ChEBI" id="CHEBI:58210"/>
    </ligand>
</feature>
<feature type="binding site" evidence="1 10 11">
    <location>
        <position position="223"/>
    </location>
    <ligand>
        <name>FMN</name>
        <dbReference type="ChEBI" id="CHEBI:58210"/>
    </ligand>
</feature>
<feature type="helix" evidence="12">
    <location>
        <begin position="14"/>
        <end position="24"/>
    </location>
</feature>
<feature type="helix" evidence="12">
    <location>
        <begin position="38"/>
        <end position="48"/>
    </location>
</feature>
<feature type="helix" evidence="12">
    <location>
        <begin position="54"/>
        <end position="56"/>
    </location>
</feature>
<feature type="strand" evidence="12">
    <location>
        <begin position="61"/>
        <end position="65"/>
    </location>
</feature>
<feature type="helix" evidence="12">
    <location>
        <begin position="67"/>
        <end position="82"/>
    </location>
</feature>
<feature type="helix" evidence="12">
    <location>
        <begin position="99"/>
        <end position="116"/>
    </location>
</feature>
<feature type="helix" evidence="12">
    <location>
        <begin position="123"/>
        <end position="134"/>
    </location>
</feature>
<feature type="helix" evidence="12">
    <location>
        <begin position="135"/>
        <end position="138"/>
    </location>
</feature>
<feature type="strand" evidence="12">
    <location>
        <begin position="140"/>
        <end position="148"/>
    </location>
</feature>
<feature type="helix" evidence="12">
    <location>
        <begin position="153"/>
        <end position="172"/>
    </location>
</feature>
<feature type="strand" evidence="12">
    <location>
        <begin position="176"/>
        <end position="180"/>
    </location>
</feature>
<feature type="helix" evidence="12">
    <location>
        <begin position="181"/>
        <end position="185"/>
    </location>
</feature>
<feature type="helix" evidence="12">
    <location>
        <begin position="187"/>
        <end position="194"/>
    </location>
</feature>
<feature type="strand" evidence="12">
    <location>
        <begin position="198"/>
        <end position="208"/>
    </location>
</feature>
<feature type="helix" evidence="12">
    <location>
        <begin position="215"/>
        <end position="218"/>
    </location>
</feature>
<feature type="helix" evidence="12">
    <location>
        <begin position="226"/>
        <end position="229"/>
    </location>
</feature>
<feature type="strand" evidence="12">
    <location>
        <begin position="230"/>
        <end position="233"/>
    </location>
</feature>
<proteinExistence type="evidence at protein level"/>
<evidence type="ECO:0000269" key="1">
    <source>
    </source>
</evidence>
<evidence type="ECO:0000269" key="2">
    <source>
    </source>
</evidence>
<evidence type="ECO:0000303" key="3">
    <source>
    </source>
</evidence>
<evidence type="ECO:0000303" key="4">
    <source>
    </source>
</evidence>
<evidence type="ECO:0000305" key="5"/>
<evidence type="ECO:0000312" key="6">
    <source>
        <dbReference type="EMBL" id="ABK74228.1"/>
    </source>
</evidence>
<evidence type="ECO:0000312" key="7">
    <source>
        <dbReference type="EMBL" id="AFP42759.1"/>
    </source>
</evidence>
<evidence type="ECO:0000312" key="8">
    <source>
        <dbReference type="Proteomes" id="UP000000757"/>
    </source>
</evidence>
<evidence type="ECO:0000312" key="9">
    <source>
        <dbReference type="Proteomes" id="UP000006158"/>
    </source>
</evidence>
<evidence type="ECO:0007744" key="10">
    <source>
        <dbReference type="PDB" id="2WZV"/>
    </source>
</evidence>
<evidence type="ECO:0007744" key="11">
    <source>
        <dbReference type="PDB" id="2WZW"/>
    </source>
</evidence>
<evidence type="ECO:0007829" key="12">
    <source>
        <dbReference type="PDB" id="2WZV"/>
    </source>
</evidence>
<reference evidence="6 8" key="1">
    <citation type="submission" date="2006-10" db="EMBL/GenBank/DDBJ databases">
        <authorList>
            <person name="Fleischmann R.D."/>
            <person name="Dodson R.J."/>
            <person name="Haft D.H."/>
            <person name="Merkel J.S."/>
            <person name="Nelson W.C."/>
            <person name="Fraser C.M."/>
        </authorList>
    </citation>
    <scope>NUCLEOTIDE SEQUENCE [LARGE SCALE GENOMIC DNA]</scope>
    <source>
        <strain evidence="8">ATCC 700084 / mc(2)155</strain>
    </source>
</reference>
<reference evidence="7 9" key="2">
    <citation type="journal article" date="2007" name="Genome Biol.">
        <title>Interrupted coding sequences in Mycobacterium smegmatis: authentic mutations or sequencing errors?</title>
        <authorList>
            <person name="Deshayes C."/>
            <person name="Perrodou E."/>
            <person name="Gallien S."/>
            <person name="Euphrasie D."/>
            <person name="Schaeffer C."/>
            <person name="Van-Dorsselaer A."/>
            <person name="Poch O."/>
            <person name="Lecompte O."/>
            <person name="Reyrat J.-M."/>
        </authorList>
    </citation>
    <scope>NUCLEOTIDE SEQUENCE [LARGE SCALE GENOMIC DNA]</scope>
    <source>
        <strain evidence="9">ATCC 700084 / mc(2)155</strain>
    </source>
</reference>
<reference evidence="7 9" key="3">
    <citation type="journal article" date="2009" name="Genome Res.">
        <title>Ortho-proteogenomics: multiple proteomes investigation through orthology and a new MS-based protocol.</title>
        <authorList>
            <person name="Gallien S."/>
            <person name="Perrodou E."/>
            <person name="Carapito C."/>
            <person name="Deshayes C."/>
            <person name="Reyrat J.-M."/>
            <person name="Van Dorsselaer A."/>
            <person name="Poch O."/>
            <person name="Schaeffer C."/>
            <person name="Lecompte O."/>
        </authorList>
    </citation>
    <scope>NUCLEOTIDE SEQUENCE [LARGE SCALE GENOMIC DNA]</scope>
    <source>
        <strain>ATCC 700084 / mc(2)155</strain>
    </source>
</reference>
<reference key="4">
    <citation type="journal article" date="2011" name="PLoS ONE">
        <title>Analogous mechanisms of resistance to benzothiazinones and dinitrobenzamides in Mycobacterium smegmatis.</title>
        <authorList>
            <person name="Ribeiro A.L."/>
            <person name="Degiacomi G."/>
            <person name="Ewann F."/>
            <person name="Buroni S."/>
            <person name="Incandela M.L."/>
            <person name="Chiarelli L.R."/>
            <person name="Mori G."/>
            <person name="Kim J."/>
            <person name="Contreras-Dominguez M."/>
            <person name="Park Y.S."/>
            <person name="Han S.J."/>
            <person name="Brodin P."/>
            <person name="Valentini G."/>
            <person name="Rizzi M."/>
            <person name="Riccardi G."/>
            <person name="Pasca M.R."/>
        </authorList>
    </citation>
    <scope>FUNCTION</scope>
    <scope>CATALYTIC ACTIVITY</scope>
</reference>
<reference evidence="10 11" key="5">
    <citation type="journal article" date="2010" name="Mol. Microbiol.">
        <title>Biological and structural characterization of the Mycobacterium smegmatis nitroreductase NfnB, and its role in benzothiazinone resistance.</title>
        <authorList>
            <person name="Manina G."/>
            <person name="Bellinzoni M."/>
            <person name="Pasca M.R."/>
            <person name="Neres J."/>
            <person name="Milano A."/>
            <person name="Ribeiro A.L."/>
            <person name="Buroni S."/>
            <person name="Skovierova H."/>
            <person name="Dianiskova P."/>
            <person name="Mikusova K."/>
            <person name="Marak J."/>
            <person name="Makarov V."/>
            <person name="Giganti D."/>
            <person name="Haouz A."/>
            <person name="Lucarelli A.P."/>
            <person name="Degiacomi G."/>
            <person name="Piazza A."/>
            <person name="Chiarelli L.R."/>
            <person name="De Rossi E."/>
            <person name="Salina E."/>
            <person name="Cole S.T."/>
            <person name="Alzari P.M."/>
            <person name="Riccardi G."/>
        </authorList>
    </citation>
    <scope>X-RAY CRYSTALLOGRAPHY (1.75 ANGSTROMS) IN COMPLEX WITH FMN AND NADP</scope>
    <scope>FUNCTION</scope>
    <scope>CATALYTIC ACTIVITY</scope>
    <scope>COFACTOR</scope>
    <scope>BIOPHYSICOCHEMICAL PROPERTIES</scope>
    <scope>SUBUNIT</scope>
    <scope>INDUCTION</scope>
    <scope>DISRUPTION PHENOTYPE</scope>
    <scope>BIOTECHNOLOGY</scope>
    <source>
        <strain evidence="3">ATCC 700084 / mc(2)155</strain>
    </source>
</reference>
<sequence length="234" mass="25525">MSVPTLPTGPTVDLAQAAERLIKGRRAVRAFRPDEVPEETMRAVFELAGHAPSNSNTQPWHVEVVSGAARDRLAEALVTAHAEERVTVDFPYREGLFQGVLQERRADFGSRLYAALGIARDQTDLLQGYNTESLRFYGAPHVAMLFAPNNTEARIAGDMGIYAQTLMLAMTAHGIASCPQALLSFYADTVRAELGVENRKLLMGISFGYADDTAAVNGVRIPRAGLSETTRFSR</sequence>
<accession>A0R6D0</accession>
<accession>I7GGH9</accession>
<organism>
    <name type="scientific">Mycolicibacterium smegmatis (strain ATCC 700084 / mc(2)155)</name>
    <name type="common">Mycobacterium smegmatis</name>
    <dbReference type="NCBI Taxonomy" id="246196"/>
    <lineage>
        <taxon>Bacteria</taxon>
        <taxon>Bacillati</taxon>
        <taxon>Actinomycetota</taxon>
        <taxon>Actinomycetes</taxon>
        <taxon>Mycobacteriales</taxon>
        <taxon>Mycobacteriaceae</taxon>
        <taxon>Mycolicibacterium</taxon>
    </lineage>
</organism>
<protein>
    <recommendedName>
        <fullName evidence="3 6 7">Nitroreductase NfnB</fullName>
        <shortName evidence="3">NR NfnB</shortName>
        <ecNumber evidence="1 2">1.-.-.-</ecNumber>
    </recommendedName>
    <alternativeName>
        <fullName evidence="3">FMN-dependent NAD(P)H nitroreductase</fullName>
    </alternativeName>
</protein>
<name>NFNB_MYCS2</name>